<sequence length="404" mass="43165">MSQSGSRLFTSESVTEGHPDKICDAISDSILDALLTDDPRARVAVETLVTTGQVHVAGEVTTSAYADIPKIVRDTVLEIGYDSSAKGFDGNSCGVNVAIGAQSPEIAQGVDHSHEVRTGELSDDEIDRQGAGDQGLMFGFATTDTPELMPLPIALAHRLSRRLTEVRKSGVLPYLRPDGKTQVTIEYDGDKAVRLDTVVISTQHAADIDLDNLLTPDLREKVLGSVLAEIDMPELDVSDIRLLVNPTGKFVLGGPMGDAGLTGRKIIVDTYGGMARHGGGAFSGKDPSKVDRSAAYAMRWVAKNAVAAGLADRIEVQVAYAIGKAAPVGLFVETFGTEKTDPARIQQAITETFDLRPGAIIRDLDLLRPIYAQTAAYGHFGRTDIDLPWESIDRAEKLRAAAGL</sequence>
<reference key="1">
    <citation type="journal article" date="2006" name="Proc. Natl. Acad. Sci. U.S.A.">
        <title>The complete genome of Rhodococcus sp. RHA1 provides insights into a catabolic powerhouse.</title>
        <authorList>
            <person name="McLeod M.P."/>
            <person name="Warren R.L."/>
            <person name="Hsiao W.W.L."/>
            <person name="Araki N."/>
            <person name="Myhre M."/>
            <person name="Fernandes C."/>
            <person name="Miyazawa D."/>
            <person name="Wong W."/>
            <person name="Lillquist A.L."/>
            <person name="Wang D."/>
            <person name="Dosanjh M."/>
            <person name="Hara H."/>
            <person name="Petrescu A."/>
            <person name="Morin R.D."/>
            <person name="Yang G."/>
            <person name="Stott J.M."/>
            <person name="Schein J.E."/>
            <person name="Shin H."/>
            <person name="Smailus D."/>
            <person name="Siddiqui A.S."/>
            <person name="Marra M.A."/>
            <person name="Jones S.J.M."/>
            <person name="Holt R."/>
            <person name="Brinkman F.S.L."/>
            <person name="Miyauchi K."/>
            <person name="Fukuda M."/>
            <person name="Davies J.E."/>
            <person name="Mohn W.W."/>
            <person name="Eltis L.D."/>
        </authorList>
    </citation>
    <scope>NUCLEOTIDE SEQUENCE [LARGE SCALE GENOMIC DNA]</scope>
    <source>
        <strain>RHA1</strain>
    </source>
</reference>
<protein>
    <recommendedName>
        <fullName evidence="1">S-adenosylmethionine synthase</fullName>
        <shortName evidence="1">AdoMet synthase</shortName>
        <ecNumber evidence="1">2.5.1.6</ecNumber>
    </recommendedName>
    <alternativeName>
        <fullName evidence="1">MAT</fullName>
    </alternativeName>
    <alternativeName>
        <fullName evidence="1">Methionine adenosyltransferase</fullName>
    </alternativeName>
</protein>
<name>METK_RHOJR</name>
<comment type="function">
    <text evidence="1">Catalyzes the formation of S-adenosylmethionine (AdoMet) from methionine and ATP. The overall synthetic reaction is composed of two sequential steps, AdoMet formation and the subsequent tripolyphosphate hydrolysis which occurs prior to release of AdoMet from the enzyme.</text>
</comment>
<comment type="catalytic activity">
    <reaction evidence="1">
        <text>L-methionine + ATP + H2O = S-adenosyl-L-methionine + phosphate + diphosphate</text>
        <dbReference type="Rhea" id="RHEA:21080"/>
        <dbReference type="ChEBI" id="CHEBI:15377"/>
        <dbReference type="ChEBI" id="CHEBI:30616"/>
        <dbReference type="ChEBI" id="CHEBI:33019"/>
        <dbReference type="ChEBI" id="CHEBI:43474"/>
        <dbReference type="ChEBI" id="CHEBI:57844"/>
        <dbReference type="ChEBI" id="CHEBI:59789"/>
        <dbReference type="EC" id="2.5.1.6"/>
    </reaction>
</comment>
<comment type="cofactor">
    <cofactor evidence="1">
        <name>Mg(2+)</name>
        <dbReference type="ChEBI" id="CHEBI:18420"/>
    </cofactor>
    <text evidence="1">Binds 2 divalent ions per subunit.</text>
</comment>
<comment type="cofactor">
    <cofactor evidence="1">
        <name>K(+)</name>
        <dbReference type="ChEBI" id="CHEBI:29103"/>
    </cofactor>
    <text evidence="1">Binds 1 potassium ion per subunit.</text>
</comment>
<comment type="pathway">
    <text evidence="1">Amino-acid biosynthesis; S-adenosyl-L-methionine biosynthesis; S-adenosyl-L-methionine from L-methionine: step 1/1.</text>
</comment>
<comment type="subunit">
    <text evidence="1">Homotetramer; dimer of dimers.</text>
</comment>
<comment type="subcellular location">
    <subcellularLocation>
        <location evidence="1">Cytoplasm</location>
    </subcellularLocation>
</comment>
<comment type="similarity">
    <text evidence="1">Belongs to the AdoMet synthase family.</text>
</comment>
<organism>
    <name type="scientific">Rhodococcus jostii (strain RHA1)</name>
    <dbReference type="NCBI Taxonomy" id="101510"/>
    <lineage>
        <taxon>Bacteria</taxon>
        <taxon>Bacillati</taxon>
        <taxon>Actinomycetota</taxon>
        <taxon>Actinomycetes</taxon>
        <taxon>Mycobacteriales</taxon>
        <taxon>Nocardiaceae</taxon>
        <taxon>Rhodococcus</taxon>
    </lineage>
</organism>
<gene>
    <name evidence="1" type="primary">metK</name>
    <name type="ordered locus">RHA1_ro07158</name>
</gene>
<accession>Q0S0L4</accession>
<evidence type="ECO:0000255" key="1">
    <source>
        <dbReference type="HAMAP-Rule" id="MF_00086"/>
    </source>
</evidence>
<dbReference type="EC" id="2.5.1.6" evidence="1"/>
<dbReference type="EMBL" id="CP000431">
    <property type="protein sequence ID" value="ABG98922.1"/>
    <property type="molecule type" value="Genomic_DNA"/>
</dbReference>
<dbReference type="RefSeq" id="WP_011598865.1">
    <property type="nucleotide sequence ID" value="NC_008268.1"/>
</dbReference>
<dbReference type="SMR" id="Q0S0L4"/>
<dbReference type="KEGG" id="rha:RHA1_ro07158"/>
<dbReference type="PATRIC" id="fig|101510.16.peg.7211"/>
<dbReference type="eggNOG" id="COG0192">
    <property type="taxonomic scope" value="Bacteria"/>
</dbReference>
<dbReference type="HOGENOM" id="CLU_041802_1_1_11"/>
<dbReference type="OrthoDB" id="9801686at2"/>
<dbReference type="UniPathway" id="UPA00315">
    <property type="reaction ID" value="UER00080"/>
</dbReference>
<dbReference type="Proteomes" id="UP000008710">
    <property type="component" value="Chromosome"/>
</dbReference>
<dbReference type="GO" id="GO:0005737">
    <property type="term" value="C:cytoplasm"/>
    <property type="evidence" value="ECO:0007669"/>
    <property type="project" value="UniProtKB-SubCell"/>
</dbReference>
<dbReference type="GO" id="GO:0005524">
    <property type="term" value="F:ATP binding"/>
    <property type="evidence" value="ECO:0007669"/>
    <property type="project" value="UniProtKB-UniRule"/>
</dbReference>
<dbReference type="GO" id="GO:0000287">
    <property type="term" value="F:magnesium ion binding"/>
    <property type="evidence" value="ECO:0007669"/>
    <property type="project" value="UniProtKB-UniRule"/>
</dbReference>
<dbReference type="GO" id="GO:0004478">
    <property type="term" value="F:methionine adenosyltransferase activity"/>
    <property type="evidence" value="ECO:0007669"/>
    <property type="project" value="UniProtKB-UniRule"/>
</dbReference>
<dbReference type="GO" id="GO:0006730">
    <property type="term" value="P:one-carbon metabolic process"/>
    <property type="evidence" value="ECO:0007669"/>
    <property type="project" value="UniProtKB-KW"/>
</dbReference>
<dbReference type="GO" id="GO:0006556">
    <property type="term" value="P:S-adenosylmethionine biosynthetic process"/>
    <property type="evidence" value="ECO:0007669"/>
    <property type="project" value="UniProtKB-UniRule"/>
</dbReference>
<dbReference type="CDD" id="cd18079">
    <property type="entry name" value="S-AdoMet_synt"/>
    <property type="match status" value="1"/>
</dbReference>
<dbReference type="FunFam" id="3.30.300.10:FF:000006">
    <property type="entry name" value="S-adenosylmethionine synthase"/>
    <property type="match status" value="1"/>
</dbReference>
<dbReference type="Gene3D" id="3.30.300.10">
    <property type="match status" value="3"/>
</dbReference>
<dbReference type="HAMAP" id="MF_00086">
    <property type="entry name" value="S_AdoMet_synth1"/>
    <property type="match status" value="1"/>
</dbReference>
<dbReference type="InterPro" id="IPR022631">
    <property type="entry name" value="ADOMET_SYNTHASE_CS"/>
</dbReference>
<dbReference type="InterPro" id="IPR022630">
    <property type="entry name" value="S-AdoMet_synt_C"/>
</dbReference>
<dbReference type="InterPro" id="IPR022629">
    <property type="entry name" value="S-AdoMet_synt_central"/>
</dbReference>
<dbReference type="InterPro" id="IPR022628">
    <property type="entry name" value="S-AdoMet_synt_N"/>
</dbReference>
<dbReference type="InterPro" id="IPR002133">
    <property type="entry name" value="S-AdoMet_synthetase"/>
</dbReference>
<dbReference type="InterPro" id="IPR022636">
    <property type="entry name" value="S-AdoMet_synthetase_sfam"/>
</dbReference>
<dbReference type="NCBIfam" id="TIGR01034">
    <property type="entry name" value="metK"/>
    <property type="match status" value="1"/>
</dbReference>
<dbReference type="PANTHER" id="PTHR11964">
    <property type="entry name" value="S-ADENOSYLMETHIONINE SYNTHETASE"/>
    <property type="match status" value="1"/>
</dbReference>
<dbReference type="Pfam" id="PF02773">
    <property type="entry name" value="S-AdoMet_synt_C"/>
    <property type="match status" value="1"/>
</dbReference>
<dbReference type="Pfam" id="PF02772">
    <property type="entry name" value="S-AdoMet_synt_M"/>
    <property type="match status" value="1"/>
</dbReference>
<dbReference type="Pfam" id="PF00438">
    <property type="entry name" value="S-AdoMet_synt_N"/>
    <property type="match status" value="1"/>
</dbReference>
<dbReference type="PIRSF" id="PIRSF000497">
    <property type="entry name" value="MAT"/>
    <property type="match status" value="1"/>
</dbReference>
<dbReference type="SUPFAM" id="SSF55973">
    <property type="entry name" value="S-adenosylmethionine synthetase"/>
    <property type="match status" value="3"/>
</dbReference>
<dbReference type="PROSITE" id="PS00376">
    <property type="entry name" value="ADOMET_SYNTHASE_1"/>
    <property type="match status" value="1"/>
</dbReference>
<dbReference type="PROSITE" id="PS00377">
    <property type="entry name" value="ADOMET_SYNTHASE_2"/>
    <property type="match status" value="1"/>
</dbReference>
<feature type="chain" id="PRO_0000302971" description="S-adenosylmethionine synthase">
    <location>
        <begin position="1"/>
        <end position="404"/>
    </location>
</feature>
<feature type="region of interest" description="Flexible loop" evidence="1">
    <location>
        <begin position="102"/>
        <end position="112"/>
    </location>
</feature>
<feature type="binding site" description="in other chain" evidence="1">
    <location>
        <position position="18"/>
    </location>
    <ligand>
        <name>ATP</name>
        <dbReference type="ChEBI" id="CHEBI:30616"/>
        <note>ligand shared between two neighboring subunits</note>
    </ligand>
</feature>
<feature type="binding site" evidence="1">
    <location>
        <position position="20"/>
    </location>
    <ligand>
        <name>Mg(2+)</name>
        <dbReference type="ChEBI" id="CHEBI:18420"/>
    </ligand>
</feature>
<feature type="binding site" evidence="1">
    <location>
        <position position="46"/>
    </location>
    <ligand>
        <name>K(+)</name>
        <dbReference type="ChEBI" id="CHEBI:29103"/>
    </ligand>
</feature>
<feature type="binding site" description="in other chain" evidence="1">
    <location>
        <position position="59"/>
    </location>
    <ligand>
        <name>L-methionine</name>
        <dbReference type="ChEBI" id="CHEBI:57844"/>
        <note>ligand shared between two neighboring subunits</note>
    </ligand>
</feature>
<feature type="binding site" description="in other chain" evidence="1">
    <location>
        <position position="102"/>
    </location>
    <ligand>
        <name>L-methionine</name>
        <dbReference type="ChEBI" id="CHEBI:57844"/>
        <note>ligand shared between two neighboring subunits</note>
    </ligand>
</feature>
<feature type="binding site" description="in other chain" evidence="1">
    <location>
        <begin position="178"/>
        <end position="180"/>
    </location>
    <ligand>
        <name>ATP</name>
        <dbReference type="ChEBI" id="CHEBI:30616"/>
        <note>ligand shared between two neighboring subunits</note>
    </ligand>
</feature>
<feature type="binding site" description="in other chain" evidence="1">
    <location>
        <begin position="249"/>
        <end position="250"/>
    </location>
    <ligand>
        <name>ATP</name>
        <dbReference type="ChEBI" id="CHEBI:30616"/>
        <note>ligand shared between two neighboring subunits</note>
    </ligand>
</feature>
<feature type="binding site" evidence="1">
    <location>
        <position position="258"/>
    </location>
    <ligand>
        <name>ATP</name>
        <dbReference type="ChEBI" id="CHEBI:30616"/>
        <note>ligand shared between two neighboring subunits</note>
    </ligand>
</feature>
<feature type="binding site" evidence="1">
    <location>
        <position position="258"/>
    </location>
    <ligand>
        <name>L-methionine</name>
        <dbReference type="ChEBI" id="CHEBI:57844"/>
        <note>ligand shared between two neighboring subunits</note>
    </ligand>
</feature>
<feature type="binding site" description="in other chain" evidence="1">
    <location>
        <begin position="264"/>
        <end position="265"/>
    </location>
    <ligand>
        <name>ATP</name>
        <dbReference type="ChEBI" id="CHEBI:30616"/>
        <note>ligand shared between two neighboring subunits</note>
    </ligand>
</feature>
<feature type="binding site" evidence="1">
    <location>
        <position position="281"/>
    </location>
    <ligand>
        <name>ATP</name>
        <dbReference type="ChEBI" id="CHEBI:30616"/>
        <note>ligand shared between two neighboring subunits</note>
    </ligand>
</feature>
<feature type="binding site" evidence="1">
    <location>
        <position position="285"/>
    </location>
    <ligand>
        <name>ATP</name>
        <dbReference type="ChEBI" id="CHEBI:30616"/>
        <note>ligand shared between two neighboring subunits</note>
    </ligand>
</feature>
<feature type="binding site" description="in other chain" evidence="1">
    <location>
        <position position="289"/>
    </location>
    <ligand>
        <name>L-methionine</name>
        <dbReference type="ChEBI" id="CHEBI:57844"/>
        <note>ligand shared between two neighboring subunits</note>
    </ligand>
</feature>
<proteinExistence type="inferred from homology"/>
<keyword id="KW-0067">ATP-binding</keyword>
<keyword id="KW-0963">Cytoplasm</keyword>
<keyword id="KW-0460">Magnesium</keyword>
<keyword id="KW-0479">Metal-binding</keyword>
<keyword id="KW-0547">Nucleotide-binding</keyword>
<keyword id="KW-0554">One-carbon metabolism</keyword>
<keyword id="KW-0630">Potassium</keyword>
<keyword id="KW-0808">Transferase</keyword>